<sequence>MNMSNMAIDLVGVRKSFGDKVIVNDLSFSVARGECFGLLGPNGAGKSTIARMLLGMIWPDRGKITVLDEPVPSRARARRGVGVVPQFDNLEPEFTVRENLLVFGRYFGMSARTIEAVVPSLLEFARLESKADVRVSLLGGGMKRRLTLARALINDPHLLVMDEPTTGLDPHARHLIWERLRALLARGKTILLTTHFMEEAERLCDPLCVLESGCKIAEGEPDALIDEHIGCNVIEIYGGDLDQLRELIRPYARHIEVSGETLFCYARCPDEISVHLRGRTGLRVLQRPPNLEDVFLRLTGREMEK</sequence>
<dbReference type="EC" id="7.6.2.-" evidence="1"/>
<dbReference type="EMBL" id="AF105431">
    <property type="protein sequence ID" value="AAC80570.1"/>
    <property type="molecule type" value="Genomic_DNA"/>
</dbReference>
<dbReference type="SMR" id="Q9Z3I3"/>
<dbReference type="GO" id="GO:0005886">
    <property type="term" value="C:plasma membrane"/>
    <property type="evidence" value="ECO:0007669"/>
    <property type="project" value="UniProtKB-SubCell"/>
</dbReference>
<dbReference type="GO" id="GO:0005524">
    <property type="term" value="F:ATP binding"/>
    <property type="evidence" value="ECO:0007669"/>
    <property type="project" value="UniProtKB-KW"/>
</dbReference>
<dbReference type="GO" id="GO:0016887">
    <property type="term" value="F:ATP hydrolysis activity"/>
    <property type="evidence" value="ECO:0007669"/>
    <property type="project" value="InterPro"/>
</dbReference>
<dbReference type="GO" id="GO:0022857">
    <property type="term" value="F:transmembrane transporter activity"/>
    <property type="evidence" value="ECO:0007669"/>
    <property type="project" value="InterPro"/>
</dbReference>
<dbReference type="CDD" id="cd03263">
    <property type="entry name" value="ABC_subfamily_A"/>
    <property type="match status" value="1"/>
</dbReference>
<dbReference type="FunFam" id="3.40.50.300:FF:000589">
    <property type="entry name" value="ABC transporter, ATP-binding subunit"/>
    <property type="match status" value="1"/>
</dbReference>
<dbReference type="Gene3D" id="3.40.50.300">
    <property type="entry name" value="P-loop containing nucleotide triphosphate hydrolases"/>
    <property type="match status" value="1"/>
</dbReference>
<dbReference type="InterPro" id="IPR003593">
    <property type="entry name" value="AAA+_ATPase"/>
</dbReference>
<dbReference type="InterPro" id="IPR003439">
    <property type="entry name" value="ABC_transporter-like_ATP-bd"/>
</dbReference>
<dbReference type="InterPro" id="IPR050763">
    <property type="entry name" value="ABC_transporter_ATP-binding"/>
</dbReference>
<dbReference type="InterPro" id="IPR005978">
    <property type="entry name" value="ABC_transptNodI"/>
</dbReference>
<dbReference type="InterPro" id="IPR027417">
    <property type="entry name" value="P-loop_NTPase"/>
</dbReference>
<dbReference type="NCBIfam" id="TIGR01288">
    <property type="entry name" value="nodI"/>
    <property type="match status" value="1"/>
</dbReference>
<dbReference type="NCBIfam" id="NF010059">
    <property type="entry name" value="PRK13536.1"/>
    <property type="match status" value="1"/>
</dbReference>
<dbReference type="PANTHER" id="PTHR42711">
    <property type="entry name" value="ABC TRANSPORTER ATP-BINDING PROTEIN"/>
    <property type="match status" value="1"/>
</dbReference>
<dbReference type="PANTHER" id="PTHR42711:SF5">
    <property type="entry name" value="ABC TRANSPORTER ATP-BINDING PROTEIN NATA"/>
    <property type="match status" value="1"/>
</dbReference>
<dbReference type="Pfam" id="PF00005">
    <property type="entry name" value="ABC_tran"/>
    <property type="match status" value="1"/>
</dbReference>
<dbReference type="SMART" id="SM00382">
    <property type="entry name" value="AAA"/>
    <property type="match status" value="1"/>
</dbReference>
<dbReference type="SUPFAM" id="SSF52540">
    <property type="entry name" value="P-loop containing nucleoside triphosphate hydrolases"/>
    <property type="match status" value="1"/>
</dbReference>
<dbReference type="PROSITE" id="PS50893">
    <property type="entry name" value="ABC_TRANSPORTER_2"/>
    <property type="match status" value="1"/>
</dbReference>
<dbReference type="PROSITE" id="PS51240">
    <property type="entry name" value="NODI"/>
    <property type="match status" value="1"/>
</dbReference>
<keyword id="KW-0067">ATP-binding</keyword>
<keyword id="KW-0997">Cell inner membrane</keyword>
<keyword id="KW-1003">Cell membrane</keyword>
<keyword id="KW-0472">Membrane</keyword>
<keyword id="KW-0536">Nodulation</keyword>
<keyword id="KW-0547">Nucleotide-binding</keyword>
<keyword id="KW-1278">Translocase</keyword>
<keyword id="KW-0813">Transport</keyword>
<name>NODI_BRASS</name>
<organism>
    <name type="scientific">Bradyrhizobium sp. (strain SNU001)</name>
    <dbReference type="NCBI Taxonomy" id="84640"/>
    <lineage>
        <taxon>Bacteria</taxon>
        <taxon>Pseudomonadati</taxon>
        <taxon>Pseudomonadota</taxon>
        <taxon>Alphaproteobacteria</taxon>
        <taxon>Hyphomicrobiales</taxon>
        <taxon>Nitrobacteraceae</taxon>
        <taxon>Bradyrhizobium</taxon>
    </lineage>
</organism>
<gene>
    <name evidence="1" type="primary">nodI</name>
</gene>
<evidence type="ECO:0000255" key="1">
    <source>
        <dbReference type="HAMAP-Rule" id="MF_01704"/>
    </source>
</evidence>
<protein>
    <recommendedName>
        <fullName evidence="1">Nod factor export ATP-binding protein I</fullName>
        <ecNumber evidence="1">7.6.2.-</ecNumber>
    </recommendedName>
    <alternativeName>
        <fullName evidence="1">Nodulation ATP-binding protein I</fullName>
    </alternativeName>
</protein>
<feature type="chain" id="PRO_0000092636" description="Nod factor export ATP-binding protein I">
    <location>
        <begin position="1"/>
        <end position="305"/>
    </location>
</feature>
<feature type="domain" description="ABC transporter" evidence="1">
    <location>
        <begin position="8"/>
        <end position="237"/>
    </location>
</feature>
<feature type="binding site" evidence="1">
    <location>
        <begin position="40"/>
        <end position="47"/>
    </location>
    <ligand>
        <name>ATP</name>
        <dbReference type="ChEBI" id="CHEBI:30616"/>
    </ligand>
</feature>
<reference key="1">
    <citation type="submission" date="1998-11" db="EMBL/GenBank/DDBJ databases">
        <title>Nucleotide sequences of nodBCSUIJ genes from Bradyrhizobium sp. SNU001.</title>
        <authorList>
            <person name="Kim H.J."/>
            <person name="An C.S."/>
        </authorList>
    </citation>
    <scope>NUCLEOTIDE SEQUENCE [GENOMIC DNA]</scope>
</reference>
<accession>Q9Z3I3</accession>
<comment type="function">
    <text evidence="1">Part of the ABC transporter complex NodIJ involved in the export of the nodulation factors (Nod factors), the bacterial signal molecules that induce symbiosis and subsequent nodulation induction. Nod factors are LCO (lipo-chitin oligosaccharide), a modified beta-1,4-linked N-acetylglucosamine oligosaccharide. This subunit is responsible for energy coupling to the transport system.</text>
</comment>
<comment type="subunit">
    <text evidence="1">The complex is composed of two ATP-binding proteins (NodI) and two transmembrane proteins (NodJ).</text>
</comment>
<comment type="subcellular location">
    <subcellularLocation>
        <location evidence="1">Cell inner membrane</location>
        <topology evidence="1">Peripheral membrane protein</topology>
    </subcellularLocation>
</comment>
<comment type="similarity">
    <text evidence="1">Belongs to the ABC transporter superfamily. Lipooligosaccharide exporter (TC 3.A.1.102) family.</text>
</comment>
<proteinExistence type="inferred from homology"/>